<protein>
    <recommendedName>
        <fullName>COP9 signalosome complex subunit 4</fullName>
        <shortName>Dch4</shortName>
        <shortName>Signalosome subunit 4</shortName>
    </recommendedName>
</protein>
<evidence type="ECO:0000255" key="1">
    <source>
        <dbReference type="PROSITE-ProRule" id="PRU01185"/>
    </source>
</evidence>
<evidence type="ECO:0000269" key="2">
    <source>
    </source>
</evidence>
<evidence type="ECO:0000269" key="3">
    <source>
    </source>
</evidence>
<evidence type="ECO:0000269" key="4">
    <source>
    </source>
</evidence>
<evidence type="ECO:0000305" key="5"/>
<evidence type="ECO:0000305" key="6">
    <source>
    </source>
</evidence>
<proteinExistence type="evidence at protein level"/>
<dbReference type="EMBL" id="AF129082">
    <property type="protein sequence ID" value="AAD28607.1"/>
    <property type="molecule type" value="mRNA"/>
</dbReference>
<dbReference type="EMBL" id="AE013599">
    <property type="protein sequence ID" value="AAF59157.1"/>
    <property type="molecule type" value="Genomic_DNA"/>
</dbReference>
<dbReference type="EMBL" id="BT004883">
    <property type="protein sequence ID" value="AAO45239.1"/>
    <property type="molecule type" value="mRNA"/>
</dbReference>
<dbReference type="RefSeq" id="NP_001163080.1">
    <property type="nucleotide sequence ID" value="NM_001169609.2"/>
</dbReference>
<dbReference type="RefSeq" id="NP_477444.1">
    <property type="nucleotide sequence ID" value="NM_058096.4"/>
</dbReference>
<dbReference type="SMR" id="Q9V345"/>
<dbReference type="BioGRID" id="61621">
    <property type="interactions" value="37"/>
</dbReference>
<dbReference type="ComplexPortal" id="CPX-7964">
    <property type="entry name" value="COP9 signalosome complex, testis-specific variant"/>
</dbReference>
<dbReference type="ComplexPortal" id="CPX-7974">
    <property type="entry name" value="COP9 signalosome complex"/>
</dbReference>
<dbReference type="DIP" id="DIP-52178N"/>
<dbReference type="FunCoup" id="Q9V345">
    <property type="interactions" value="2666"/>
</dbReference>
<dbReference type="IntAct" id="Q9V345">
    <property type="interactions" value="20"/>
</dbReference>
<dbReference type="STRING" id="7227.FBpp0087935"/>
<dbReference type="PaxDb" id="7227-FBpp0087935"/>
<dbReference type="DNASU" id="35759"/>
<dbReference type="EnsemblMetazoa" id="FBtr0088859">
    <property type="protein sequence ID" value="FBpp0087935"/>
    <property type="gene ID" value="FBgn0027054"/>
</dbReference>
<dbReference type="EnsemblMetazoa" id="FBtr0301230">
    <property type="protein sequence ID" value="FBpp0290448"/>
    <property type="gene ID" value="FBgn0027054"/>
</dbReference>
<dbReference type="GeneID" id="35759"/>
<dbReference type="KEGG" id="dme:Dmel_CG8725"/>
<dbReference type="AGR" id="FB:FBgn0027054"/>
<dbReference type="CTD" id="35759"/>
<dbReference type="FlyBase" id="FBgn0027054">
    <property type="gene designation" value="CSN4"/>
</dbReference>
<dbReference type="VEuPathDB" id="VectorBase:FBgn0027054"/>
<dbReference type="eggNOG" id="KOG1497">
    <property type="taxonomic scope" value="Eukaryota"/>
</dbReference>
<dbReference type="GeneTree" id="ENSGT00940000153510"/>
<dbReference type="HOGENOM" id="CLU_028132_1_0_1"/>
<dbReference type="InParanoid" id="Q9V345"/>
<dbReference type="OMA" id="KNIMHTV"/>
<dbReference type="OrthoDB" id="295656at2759"/>
<dbReference type="PhylomeDB" id="Q9V345"/>
<dbReference type="Reactome" id="R-DME-5696394">
    <property type="pathway name" value="DNA Damage Recognition in GG-NER"/>
</dbReference>
<dbReference type="Reactome" id="R-DME-6781823">
    <property type="pathway name" value="Formation of TC-NER Pre-Incision Complex"/>
</dbReference>
<dbReference type="Reactome" id="R-DME-8856825">
    <property type="pathway name" value="Cargo recognition for clathrin-mediated endocytosis"/>
</dbReference>
<dbReference type="Reactome" id="R-DME-8951664">
    <property type="pathway name" value="Neddylation"/>
</dbReference>
<dbReference type="Reactome" id="R-DME-9013422">
    <property type="pathway name" value="RHOBTB1 GTPase cycle"/>
</dbReference>
<dbReference type="SignaLink" id="Q9V345"/>
<dbReference type="BioGRID-ORCS" id="35759">
    <property type="hits" value="1 hit in 1 CRISPR screen"/>
</dbReference>
<dbReference type="GenomeRNAi" id="35759"/>
<dbReference type="PRO" id="PR:Q9V345"/>
<dbReference type="Proteomes" id="UP000000803">
    <property type="component" value="Chromosome 2R"/>
</dbReference>
<dbReference type="Bgee" id="FBgn0027054">
    <property type="expression patterns" value="Expressed in cleaving embryo and 141 other cell types or tissues"/>
</dbReference>
<dbReference type="ExpressionAtlas" id="Q9V345">
    <property type="expression patterns" value="baseline and differential"/>
</dbReference>
<dbReference type="GO" id="GO:0008180">
    <property type="term" value="C:COP9 signalosome"/>
    <property type="evidence" value="ECO:0000353"/>
    <property type="project" value="FlyBase"/>
</dbReference>
<dbReference type="GO" id="GO:0005737">
    <property type="term" value="C:cytoplasm"/>
    <property type="evidence" value="ECO:0007669"/>
    <property type="project" value="UniProtKB-SubCell"/>
</dbReference>
<dbReference type="GO" id="GO:0000976">
    <property type="term" value="F:transcription cis-regulatory region binding"/>
    <property type="evidence" value="ECO:0000314"/>
    <property type="project" value="FlyBase"/>
</dbReference>
<dbReference type="GO" id="GO:0001751">
    <property type="term" value="P:compound eye photoreceptor cell differentiation"/>
    <property type="evidence" value="ECO:0000315"/>
    <property type="project" value="FlyBase"/>
</dbReference>
<dbReference type="GO" id="GO:0036099">
    <property type="term" value="P:female germ-line stem cell population maintenance"/>
    <property type="evidence" value="ECO:0000315"/>
    <property type="project" value="FlyBase"/>
</dbReference>
<dbReference type="GO" id="GO:0007281">
    <property type="term" value="P:germ cell development"/>
    <property type="evidence" value="ECO:0000315"/>
    <property type="project" value="FlyBase"/>
</dbReference>
<dbReference type="GO" id="GO:0048140">
    <property type="term" value="P:male germ-line cyst encapsulation"/>
    <property type="evidence" value="ECO:0000315"/>
    <property type="project" value="FlyBase"/>
</dbReference>
<dbReference type="GO" id="GO:0032435">
    <property type="term" value="P:negative regulation of proteasomal ubiquitin-dependent protein catabolic process"/>
    <property type="evidence" value="ECO:0000315"/>
    <property type="project" value="FlyBase"/>
</dbReference>
<dbReference type="GO" id="GO:0048477">
    <property type="term" value="P:oogenesis"/>
    <property type="evidence" value="ECO:0007669"/>
    <property type="project" value="UniProtKB-KW"/>
</dbReference>
<dbReference type="GO" id="GO:0000338">
    <property type="term" value="P:protein deneddylation"/>
    <property type="evidence" value="ECO:0000315"/>
    <property type="project" value="UniProtKB"/>
</dbReference>
<dbReference type="GO" id="GO:0050821">
    <property type="term" value="P:protein stabilization"/>
    <property type="evidence" value="ECO:0000315"/>
    <property type="project" value="FlyBase"/>
</dbReference>
<dbReference type="FunFam" id="1.10.10.10:FF:000130">
    <property type="entry name" value="COP9 signalosome complex subunit 4"/>
    <property type="match status" value="1"/>
</dbReference>
<dbReference type="Gene3D" id="1.10.10.10">
    <property type="entry name" value="Winged helix-like DNA-binding domain superfamily/Winged helix DNA-binding domain"/>
    <property type="match status" value="1"/>
</dbReference>
<dbReference type="InterPro" id="IPR041406">
    <property type="entry name" value="CSN4_HTH"/>
</dbReference>
<dbReference type="InterPro" id="IPR000717">
    <property type="entry name" value="PCI_dom"/>
</dbReference>
<dbReference type="InterPro" id="IPR054559">
    <property type="entry name" value="PSMD12-CSN4-like_N"/>
</dbReference>
<dbReference type="InterPro" id="IPR040134">
    <property type="entry name" value="PSMD12/CSN4"/>
</dbReference>
<dbReference type="InterPro" id="IPR036388">
    <property type="entry name" value="WH-like_DNA-bd_sf"/>
</dbReference>
<dbReference type="InterPro" id="IPR036390">
    <property type="entry name" value="WH_DNA-bd_sf"/>
</dbReference>
<dbReference type="PANTHER" id="PTHR10855">
    <property type="entry name" value="26S PROTEASOME NON-ATPASE REGULATORY SUBUNIT 12/COP9 SIGNALOSOME COMPLEX SUBUNIT 4"/>
    <property type="match status" value="1"/>
</dbReference>
<dbReference type="PANTHER" id="PTHR10855:SF2">
    <property type="entry name" value="COP9 SIGNALOSOME COMPLEX SUBUNIT 4"/>
    <property type="match status" value="1"/>
</dbReference>
<dbReference type="Pfam" id="PF18420">
    <property type="entry name" value="CSN4_RPN5_eIF3a"/>
    <property type="match status" value="1"/>
</dbReference>
<dbReference type="Pfam" id="PF01399">
    <property type="entry name" value="PCI"/>
    <property type="match status" value="1"/>
</dbReference>
<dbReference type="Pfam" id="PF22241">
    <property type="entry name" value="PSMD12-CSN4_N"/>
    <property type="match status" value="1"/>
</dbReference>
<dbReference type="SMART" id="SM00088">
    <property type="entry name" value="PINT"/>
    <property type="match status" value="1"/>
</dbReference>
<dbReference type="SUPFAM" id="SSF46785">
    <property type="entry name" value="Winged helix' DNA-binding domain"/>
    <property type="match status" value="1"/>
</dbReference>
<dbReference type="PROSITE" id="PS50250">
    <property type="entry name" value="PCI"/>
    <property type="match status" value="1"/>
</dbReference>
<accession>Q9V345</accession>
<accession>Q9XYW5</accession>
<gene>
    <name type="primary">CSN4</name>
    <name type="ORF">CG8725</name>
</gene>
<comment type="function">
    <text evidence="3 4">Component of the COP9 signalosome complex (CSN), a complex involved in various cellular and developmental processes. The CSN complex is an essential regulator of the ubiquitin (Ubl) conjugation pathway by mediating the deneddylation of the cullin subunits of the SCF-type E3 ligase complexes, leading to decrease the Ubl ligase activity of SCF. The CSN complex plays an essential role in oogenesis and embryogenesis and is required for proper photoreceptor R cell differentiation and promote lamina glial cell migration or axon targeting. It also promotes Ubl-dependent degradation of cyclin E (CycE) during early oogenesis.</text>
</comment>
<comment type="subunit">
    <text evidence="2">Component of the CSN complex, probably composed of CSN1b, alien/CSN2, CSN3, CSN4, CSN5, CSN6, CSN7 and CSN8. Interacts directly with CSN7.</text>
</comment>
<comment type="interaction">
    <interactant intactId="EBI-141466">
        <id>Q9V345</id>
    </interactant>
    <interactant intactId="EBI-88504">
        <id>P22745</id>
        <label>bam</label>
    </interactant>
    <organismsDiffer>false</organismsDiffer>
    <experiments>5</experiments>
</comment>
<comment type="interaction">
    <interactant intactId="EBI-141466">
        <id>Q9V345</id>
    </interactant>
    <interactant intactId="EBI-97187">
        <id>Q9XZ58</id>
        <label>CSN5</label>
    </interactant>
    <organismsDiffer>false</organismsDiffer>
    <experiments>2</experiments>
</comment>
<comment type="interaction">
    <interactant intactId="EBI-141466">
        <id>Q9V345</id>
    </interactant>
    <interactant intactId="EBI-183494">
        <id>Q9VCY3</id>
        <label>CSN6</label>
    </interactant>
    <organismsDiffer>false</organismsDiffer>
    <experiments>4</experiments>
</comment>
<comment type="interaction">
    <interactant intactId="EBI-141466">
        <id>Q9V345</id>
    </interactant>
    <interactant intactId="EBI-155199">
        <id>Q9V4S8</id>
        <label>CSN7</label>
    </interactant>
    <organismsDiffer>false</organismsDiffer>
    <experiments>2</experiments>
</comment>
<comment type="subcellular location">
    <subcellularLocation>
        <location evidence="6">Cytoplasm</location>
    </subcellularLocation>
    <subcellularLocation>
        <location evidence="6">Nucleus</location>
    </subcellularLocation>
</comment>
<comment type="similarity">
    <text evidence="5">Belongs to the CSN4 family.</text>
</comment>
<organism>
    <name type="scientific">Drosophila melanogaster</name>
    <name type="common">Fruit fly</name>
    <dbReference type="NCBI Taxonomy" id="7227"/>
    <lineage>
        <taxon>Eukaryota</taxon>
        <taxon>Metazoa</taxon>
        <taxon>Ecdysozoa</taxon>
        <taxon>Arthropoda</taxon>
        <taxon>Hexapoda</taxon>
        <taxon>Insecta</taxon>
        <taxon>Pterygota</taxon>
        <taxon>Neoptera</taxon>
        <taxon>Endopterygota</taxon>
        <taxon>Diptera</taxon>
        <taxon>Brachycera</taxon>
        <taxon>Muscomorpha</taxon>
        <taxon>Ephydroidea</taxon>
        <taxon>Drosophilidae</taxon>
        <taxon>Drosophila</taxon>
        <taxon>Sophophora</taxon>
    </lineage>
</organism>
<keyword id="KW-0963">Cytoplasm</keyword>
<keyword id="KW-0217">Developmental protein</keyword>
<keyword id="KW-0221">Differentiation</keyword>
<keyword id="KW-0539">Nucleus</keyword>
<keyword id="KW-0896">Oogenesis</keyword>
<keyword id="KW-1185">Reference proteome</keyword>
<keyword id="KW-0736">Signalosome</keyword>
<feature type="chain" id="PRO_0000120992" description="COP9 signalosome complex subunit 4">
    <location>
        <begin position="1"/>
        <end position="407"/>
    </location>
</feature>
<feature type="domain" description="PCI" evidence="1">
    <location>
        <begin position="204"/>
        <end position="373"/>
    </location>
</feature>
<feature type="sequence conflict" description="In Ref. 1; AAD28607." evidence="5" ref="1">
    <original>L</original>
    <variation>Q</variation>
    <location>
        <position position="16"/>
    </location>
</feature>
<name>CSN4_DROME</name>
<sequence>MAANYGISTAALRSQLMGLINFTGTHKDQADKYRQLLKTVLTNTGQELIDGLRLFVEAIVNEHVSLVISRQILNDVGSELSKLPDDLSKMLSHFTLEKVNPRVISFEEQVAGIRFHLANIYERNQQWRDAATVLVGIPLETGQKQYSVECKLGTYLKIARLYLEDNDSVQAELFINRASLLQAETNSEELQVLYKVCYARVLDYRRKFIEAAQRYNELSYRKIVDQGERMTALKKALICTVLASAGQQRSRMLATLFKDERCQHLPAYGILEKMYLERIIRRSELQEFEALLQDHQKAATSDGSSILDRAVFEHNLLSASKLYNNITFEELGALLDIPAVKAEKIASQMITEGRMNGHIDQISAIVHFENRELLPQWDRQIQSLCYQVNSIIEKISVAEPDWMDNLN</sequence>
<reference key="1">
    <citation type="journal article" date="1999" name="Curr. Biol.">
        <title>The COP9 signalosome is essential for development of Drosophila melanogaster.</title>
        <authorList>
            <person name="Freilich S."/>
            <person name="Oron E."/>
            <person name="Kapp Y."/>
            <person name="Nevo-Caspi Y."/>
            <person name="Orgad S."/>
            <person name="Segal D."/>
            <person name="Chamovitz D.A."/>
        </authorList>
    </citation>
    <scope>NUCLEOTIDE SEQUENCE [MRNA]</scope>
    <scope>SUBCELLULAR LOCATION</scope>
    <scope>PROBABLE COMPOSITION OF THE CSN COMPLEX</scope>
    <scope>INTERACTION WITH CSN7</scope>
</reference>
<reference key="2">
    <citation type="journal article" date="2000" name="Science">
        <title>The genome sequence of Drosophila melanogaster.</title>
        <authorList>
            <person name="Adams M.D."/>
            <person name="Celniker S.E."/>
            <person name="Holt R.A."/>
            <person name="Evans C.A."/>
            <person name="Gocayne J.D."/>
            <person name="Amanatides P.G."/>
            <person name="Scherer S.E."/>
            <person name="Li P.W."/>
            <person name="Hoskins R.A."/>
            <person name="Galle R.F."/>
            <person name="George R.A."/>
            <person name="Lewis S.E."/>
            <person name="Richards S."/>
            <person name="Ashburner M."/>
            <person name="Henderson S.N."/>
            <person name="Sutton G.G."/>
            <person name="Wortman J.R."/>
            <person name="Yandell M.D."/>
            <person name="Zhang Q."/>
            <person name="Chen L.X."/>
            <person name="Brandon R.C."/>
            <person name="Rogers Y.-H.C."/>
            <person name="Blazej R.G."/>
            <person name="Champe M."/>
            <person name="Pfeiffer B.D."/>
            <person name="Wan K.H."/>
            <person name="Doyle C."/>
            <person name="Baxter E.G."/>
            <person name="Helt G."/>
            <person name="Nelson C.R."/>
            <person name="Miklos G.L.G."/>
            <person name="Abril J.F."/>
            <person name="Agbayani A."/>
            <person name="An H.-J."/>
            <person name="Andrews-Pfannkoch C."/>
            <person name="Baldwin D."/>
            <person name="Ballew R.M."/>
            <person name="Basu A."/>
            <person name="Baxendale J."/>
            <person name="Bayraktaroglu L."/>
            <person name="Beasley E.M."/>
            <person name="Beeson K.Y."/>
            <person name="Benos P.V."/>
            <person name="Berman B.P."/>
            <person name="Bhandari D."/>
            <person name="Bolshakov S."/>
            <person name="Borkova D."/>
            <person name="Botchan M.R."/>
            <person name="Bouck J."/>
            <person name="Brokstein P."/>
            <person name="Brottier P."/>
            <person name="Burtis K.C."/>
            <person name="Busam D.A."/>
            <person name="Butler H."/>
            <person name="Cadieu E."/>
            <person name="Center A."/>
            <person name="Chandra I."/>
            <person name="Cherry J.M."/>
            <person name="Cawley S."/>
            <person name="Dahlke C."/>
            <person name="Davenport L.B."/>
            <person name="Davies P."/>
            <person name="de Pablos B."/>
            <person name="Delcher A."/>
            <person name="Deng Z."/>
            <person name="Mays A.D."/>
            <person name="Dew I."/>
            <person name="Dietz S.M."/>
            <person name="Dodson K."/>
            <person name="Doup L.E."/>
            <person name="Downes M."/>
            <person name="Dugan-Rocha S."/>
            <person name="Dunkov B.C."/>
            <person name="Dunn P."/>
            <person name="Durbin K.J."/>
            <person name="Evangelista C.C."/>
            <person name="Ferraz C."/>
            <person name="Ferriera S."/>
            <person name="Fleischmann W."/>
            <person name="Fosler C."/>
            <person name="Gabrielian A.E."/>
            <person name="Garg N.S."/>
            <person name="Gelbart W.M."/>
            <person name="Glasser K."/>
            <person name="Glodek A."/>
            <person name="Gong F."/>
            <person name="Gorrell J.H."/>
            <person name="Gu Z."/>
            <person name="Guan P."/>
            <person name="Harris M."/>
            <person name="Harris N.L."/>
            <person name="Harvey D.A."/>
            <person name="Heiman T.J."/>
            <person name="Hernandez J.R."/>
            <person name="Houck J."/>
            <person name="Hostin D."/>
            <person name="Houston K.A."/>
            <person name="Howland T.J."/>
            <person name="Wei M.-H."/>
            <person name="Ibegwam C."/>
            <person name="Jalali M."/>
            <person name="Kalush F."/>
            <person name="Karpen G.H."/>
            <person name="Ke Z."/>
            <person name="Kennison J.A."/>
            <person name="Ketchum K.A."/>
            <person name="Kimmel B.E."/>
            <person name="Kodira C.D."/>
            <person name="Kraft C.L."/>
            <person name="Kravitz S."/>
            <person name="Kulp D."/>
            <person name="Lai Z."/>
            <person name="Lasko P."/>
            <person name="Lei Y."/>
            <person name="Levitsky A.A."/>
            <person name="Li J.H."/>
            <person name="Li Z."/>
            <person name="Liang Y."/>
            <person name="Lin X."/>
            <person name="Liu X."/>
            <person name="Mattei B."/>
            <person name="McIntosh T.C."/>
            <person name="McLeod M.P."/>
            <person name="McPherson D."/>
            <person name="Merkulov G."/>
            <person name="Milshina N.V."/>
            <person name="Mobarry C."/>
            <person name="Morris J."/>
            <person name="Moshrefi A."/>
            <person name="Mount S.M."/>
            <person name="Moy M."/>
            <person name="Murphy B."/>
            <person name="Murphy L."/>
            <person name="Muzny D.M."/>
            <person name="Nelson D.L."/>
            <person name="Nelson D.R."/>
            <person name="Nelson K.A."/>
            <person name="Nixon K."/>
            <person name="Nusskern D.R."/>
            <person name="Pacleb J.M."/>
            <person name="Palazzolo M."/>
            <person name="Pittman G.S."/>
            <person name="Pan S."/>
            <person name="Pollard J."/>
            <person name="Puri V."/>
            <person name="Reese M.G."/>
            <person name="Reinert K."/>
            <person name="Remington K."/>
            <person name="Saunders R.D.C."/>
            <person name="Scheeler F."/>
            <person name="Shen H."/>
            <person name="Shue B.C."/>
            <person name="Siden-Kiamos I."/>
            <person name="Simpson M."/>
            <person name="Skupski M.P."/>
            <person name="Smith T.J."/>
            <person name="Spier E."/>
            <person name="Spradling A.C."/>
            <person name="Stapleton M."/>
            <person name="Strong R."/>
            <person name="Sun E."/>
            <person name="Svirskas R."/>
            <person name="Tector C."/>
            <person name="Turner R."/>
            <person name="Venter E."/>
            <person name="Wang A.H."/>
            <person name="Wang X."/>
            <person name="Wang Z.-Y."/>
            <person name="Wassarman D.A."/>
            <person name="Weinstock G.M."/>
            <person name="Weissenbach J."/>
            <person name="Williams S.M."/>
            <person name="Woodage T."/>
            <person name="Worley K.C."/>
            <person name="Wu D."/>
            <person name="Yang S."/>
            <person name="Yao Q.A."/>
            <person name="Ye J."/>
            <person name="Yeh R.-F."/>
            <person name="Zaveri J.S."/>
            <person name="Zhan M."/>
            <person name="Zhang G."/>
            <person name="Zhao Q."/>
            <person name="Zheng L."/>
            <person name="Zheng X.H."/>
            <person name="Zhong F.N."/>
            <person name="Zhong W."/>
            <person name="Zhou X."/>
            <person name="Zhu S.C."/>
            <person name="Zhu X."/>
            <person name="Smith H.O."/>
            <person name="Gibbs R.A."/>
            <person name="Myers E.W."/>
            <person name="Rubin G.M."/>
            <person name="Venter J.C."/>
        </authorList>
    </citation>
    <scope>NUCLEOTIDE SEQUENCE [LARGE SCALE GENOMIC DNA]</scope>
    <source>
        <strain>Berkeley</strain>
    </source>
</reference>
<reference key="3">
    <citation type="journal article" date="2002" name="Genome Biol.">
        <title>Annotation of the Drosophila melanogaster euchromatic genome: a systematic review.</title>
        <authorList>
            <person name="Misra S."/>
            <person name="Crosby M.A."/>
            <person name="Mungall C.J."/>
            <person name="Matthews B.B."/>
            <person name="Campbell K.S."/>
            <person name="Hradecky P."/>
            <person name="Huang Y."/>
            <person name="Kaminker J.S."/>
            <person name="Millburn G.H."/>
            <person name="Prochnik S.E."/>
            <person name="Smith C.D."/>
            <person name="Tupy J.L."/>
            <person name="Whitfield E.J."/>
            <person name="Bayraktaroglu L."/>
            <person name="Berman B.P."/>
            <person name="Bettencourt B.R."/>
            <person name="Celniker S.E."/>
            <person name="de Grey A.D.N.J."/>
            <person name="Drysdale R.A."/>
            <person name="Harris N.L."/>
            <person name="Richter J."/>
            <person name="Russo S."/>
            <person name="Schroeder A.J."/>
            <person name="Shu S.Q."/>
            <person name="Stapleton M."/>
            <person name="Yamada C."/>
            <person name="Ashburner M."/>
            <person name="Gelbart W.M."/>
            <person name="Rubin G.M."/>
            <person name="Lewis S.E."/>
        </authorList>
    </citation>
    <scope>GENOME REANNOTATION</scope>
    <source>
        <strain>Berkeley</strain>
    </source>
</reference>
<reference key="4">
    <citation type="submission" date="2003-02" db="EMBL/GenBank/DDBJ databases">
        <authorList>
            <person name="Stapleton M."/>
            <person name="Brokstein P."/>
            <person name="Hong L."/>
            <person name="Agbayani A."/>
            <person name="Carlson J.W."/>
            <person name="Champe M."/>
            <person name="Chavez C."/>
            <person name="Dorsett V."/>
            <person name="Dresnek D."/>
            <person name="Farfan D."/>
            <person name="Frise E."/>
            <person name="George R.A."/>
            <person name="Gonzalez M."/>
            <person name="Guarin H."/>
            <person name="Kronmiller B."/>
            <person name="Li P.W."/>
            <person name="Liao G."/>
            <person name="Miranda A."/>
            <person name="Mungall C.J."/>
            <person name="Nunoo J."/>
            <person name="Pacleb J.M."/>
            <person name="Paragas V."/>
            <person name="Park S."/>
            <person name="Patel S."/>
            <person name="Phouanenavong S."/>
            <person name="Wan K.H."/>
            <person name="Yu C."/>
            <person name="Lewis S.E."/>
            <person name="Rubin G.M."/>
            <person name="Celniker S.E."/>
        </authorList>
    </citation>
    <scope>NUCLEOTIDE SEQUENCE [LARGE SCALE MRNA]</scope>
    <source>
        <strain>Berkeley</strain>
        <tissue>Head</tissue>
    </source>
</reference>
<reference key="5">
    <citation type="journal article" date="2002" name="Development">
        <title>COP9 signalosome subunits 4 and 5 regulate multiple pleiotropic pathways in Drosophila melanogaster.</title>
        <authorList>
            <person name="Oron E."/>
            <person name="Mannervik M."/>
            <person name="Rencus S."/>
            <person name="Harari-Steinberg O."/>
            <person name="Neuman-Silberberg S."/>
            <person name="Segal D."/>
            <person name="Chamovitz D.A."/>
        </authorList>
    </citation>
    <scope>FUNCTION</scope>
    <scope>COMPONENT OF THE CSN COMPLEX WITH CSN5 AND CSN7</scope>
</reference>
<reference key="6">
    <citation type="journal article" date="2003" name="Dev. Cell">
        <title>The COP9 signalosome promotes degradation of Cyclin E during early Drosophila oogenesis.</title>
        <authorList>
            <person name="Doronkin S."/>
            <person name="Djagaeva I."/>
            <person name="Beckendorf S.K."/>
        </authorList>
    </citation>
    <scope>FUNCTION OF CSN COMPLEX</scope>
</reference>